<proteinExistence type="inferred from homology"/>
<feature type="chain" id="PRO_1000213246" description="NAD(P)H dehydrogenase (quinone)">
    <location>
        <begin position="1"/>
        <end position="199"/>
    </location>
</feature>
<feature type="domain" description="Flavodoxin-like" evidence="1">
    <location>
        <begin position="4"/>
        <end position="190"/>
    </location>
</feature>
<feature type="binding site" evidence="1">
    <location>
        <begin position="10"/>
        <end position="15"/>
    </location>
    <ligand>
        <name>FMN</name>
        <dbReference type="ChEBI" id="CHEBI:58210"/>
    </ligand>
</feature>
<feature type="binding site" evidence="1">
    <location>
        <position position="12"/>
    </location>
    <ligand>
        <name>NAD(+)</name>
        <dbReference type="ChEBI" id="CHEBI:57540"/>
    </ligand>
</feature>
<feature type="binding site" evidence="1">
    <location>
        <begin position="79"/>
        <end position="81"/>
    </location>
    <ligand>
        <name>FMN</name>
        <dbReference type="ChEBI" id="CHEBI:58210"/>
    </ligand>
</feature>
<feature type="binding site" evidence="1">
    <location>
        <position position="99"/>
    </location>
    <ligand>
        <name>substrate</name>
    </ligand>
</feature>
<feature type="binding site" evidence="1">
    <location>
        <position position="134"/>
    </location>
    <ligand>
        <name>FMN</name>
        <dbReference type="ChEBI" id="CHEBI:58210"/>
    </ligand>
</feature>
<dbReference type="EC" id="1.6.5.2" evidence="1"/>
<dbReference type="EMBL" id="CP001616">
    <property type="protein sequence ID" value="ACQ91714.1"/>
    <property type="molecule type" value="Genomic_DNA"/>
</dbReference>
<dbReference type="RefSeq" id="WP_012728314.1">
    <property type="nucleotide sequence ID" value="NC_012691.1"/>
</dbReference>
<dbReference type="SMR" id="C4L7R5"/>
<dbReference type="STRING" id="595494.Tola_0084"/>
<dbReference type="KEGG" id="tau:Tola_0084"/>
<dbReference type="eggNOG" id="COG0655">
    <property type="taxonomic scope" value="Bacteria"/>
</dbReference>
<dbReference type="HOGENOM" id="CLU_051402_0_2_6"/>
<dbReference type="OrthoDB" id="9801479at2"/>
<dbReference type="Proteomes" id="UP000009073">
    <property type="component" value="Chromosome"/>
</dbReference>
<dbReference type="GO" id="GO:0016020">
    <property type="term" value="C:membrane"/>
    <property type="evidence" value="ECO:0007669"/>
    <property type="project" value="TreeGrafter"/>
</dbReference>
<dbReference type="GO" id="GO:0050660">
    <property type="term" value="F:flavin adenine dinucleotide binding"/>
    <property type="evidence" value="ECO:0007669"/>
    <property type="project" value="UniProtKB-UniRule"/>
</dbReference>
<dbReference type="GO" id="GO:0010181">
    <property type="term" value="F:FMN binding"/>
    <property type="evidence" value="ECO:0007669"/>
    <property type="project" value="InterPro"/>
</dbReference>
<dbReference type="GO" id="GO:0051287">
    <property type="term" value="F:NAD binding"/>
    <property type="evidence" value="ECO:0007669"/>
    <property type="project" value="UniProtKB-UniRule"/>
</dbReference>
<dbReference type="GO" id="GO:0050136">
    <property type="term" value="F:NADH:ubiquinone reductase (non-electrogenic) activity"/>
    <property type="evidence" value="ECO:0007669"/>
    <property type="project" value="RHEA"/>
</dbReference>
<dbReference type="GO" id="GO:0050661">
    <property type="term" value="F:NADP binding"/>
    <property type="evidence" value="ECO:0007669"/>
    <property type="project" value="UniProtKB-UniRule"/>
</dbReference>
<dbReference type="GO" id="GO:0008753">
    <property type="term" value="F:NADPH dehydrogenase (quinone) activity"/>
    <property type="evidence" value="ECO:0007669"/>
    <property type="project" value="RHEA"/>
</dbReference>
<dbReference type="FunFam" id="3.40.50.360:FF:000001">
    <property type="entry name" value="NAD(P)H dehydrogenase (Quinone) FQR1-like"/>
    <property type="match status" value="1"/>
</dbReference>
<dbReference type="Gene3D" id="3.40.50.360">
    <property type="match status" value="1"/>
</dbReference>
<dbReference type="HAMAP" id="MF_01017">
    <property type="entry name" value="NQOR"/>
    <property type="match status" value="1"/>
</dbReference>
<dbReference type="InterPro" id="IPR008254">
    <property type="entry name" value="Flavodoxin/NO_synth"/>
</dbReference>
<dbReference type="InterPro" id="IPR029039">
    <property type="entry name" value="Flavoprotein-like_sf"/>
</dbReference>
<dbReference type="InterPro" id="IPR010089">
    <property type="entry name" value="Flavoprotein_WrbA-like"/>
</dbReference>
<dbReference type="InterPro" id="IPR005025">
    <property type="entry name" value="FMN_Rdtase-like_dom"/>
</dbReference>
<dbReference type="InterPro" id="IPR037513">
    <property type="entry name" value="NQO"/>
</dbReference>
<dbReference type="NCBIfam" id="TIGR01755">
    <property type="entry name" value="flav_wrbA"/>
    <property type="match status" value="1"/>
</dbReference>
<dbReference type="NCBIfam" id="NF002999">
    <property type="entry name" value="PRK03767.1"/>
    <property type="match status" value="1"/>
</dbReference>
<dbReference type="PANTHER" id="PTHR30546">
    <property type="entry name" value="FLAVODOXIN-RELATED PROTEIN WRBA-RELATED"/>
    <property type="match status" value="1"/>
</dbReference>
<dbReference type="PANTHER" id="PTHR30546:SF23">
    <property type="entry name" value="FLAVOPROTEIN-LIKE PROTEIN YCP4-RELATED"/>
    <property type="match status" value="1"/>
</dbReference>
<dbReference type="Pfam" id="PF03358">
    <property type="entry name" value="FMN_red"/>
    <property type="match status" value="1"/>
</dbReference>
<dbReference type="SUPFAM" id="SSF52218">
    <property type="entry name" value="Flavoproteins"/>
    <property type="match status" value="1"/>
</dbReference>
<dbReference type="PROSITE" id="PS50902">
    <property type="entry name" value="FLAVODOXIN_LIKE"/>
    <property type="match status" value="1"/>
</dbReference>
<name>NQOR_TOLAT</name>
<comment type="catalytic activity">
    <reaction evidence="1">
        <text>a quinone + NADH + H(+) = a quinol + NAD(+)</text>
        <dbReference type="Rhea" id="RHEA:46160"/>
        <dbReference type="ChEBI" id="CHEBI:15378"/>
        <dbReference type="ChEBI" id="CHEBI:24646"/>
        <dbReference type="ChEBI" id="CHEBI:57540"/>
        <dbReference type="ChEBI" id="CHEBI:57945"/>
        <dbReference type="ChEBI" id="CHEBI:132124"/>
        <dbReference type="EC" id="1.6.5.2"/>
    </reaction>
</comment>
<comment type="catalytic activity">
    <reaction evidence="1">
        <text>a quinone + NADPH + H(+) = a quinol + NADP(+)</text>
        <dbReference type="Rhea" id="RHEA:46164"/>
        <dbReference type="ChEBI" id="CHEBI:15378"/>
        <dbReference type="ChEBI" id="CHEBI:24646"/>
        <dbReference type="ChEBI" id="CHEBI:57783"/>
        <dbReference type="ChEBI" id="CHEBI:58349"/>
        <dbReference type="ChEBI" id="CHEBI:132124"/>
        <dbReference type="EC" id="1.6.5.2"/>
    </reaction>
</comment>
<comment type="cofactor">
    <cofactor evidence="1">
        <name>FMN</name>
        <dbReference type="ChEBI" id="CHEBI:58210"/>
    </cofactor>
    <text evidence="1">Binds 1 FMN per monomer.</text>
</comment>
<comment type="similarity">
    <text evidence="1">Belongs to the WrbA family.</text>
</comment>
<organism>
    <name type="scientific">Tolumonas auensis (strain DSM 9187 / NBRC 110442 / TA 4)</name>
    <dbReference type="NCBI Taxonomy" id="595494"/>
    <lineage>
        <taxon>Bacteria</taxon>
        <taxon>Pseudomonadati</taxon>
        <taxon>Pseudomonadota</taxon>
        <taxon>Gammaproteobacteria</taxon>
        <taxon>Aeromonadales</taxon>
        <taxon>Aeromonadaceae</taxon>
        <taxon>Tolumonas</taxon>
    </lineage>
</organism>
<keyword id="KW-0285">Flavoprotein</keyword>
<keyword id="KW-0288">FMN</keyword>
<keyword id="KW-0520">NAD</keyword>
<keyword id="KW-0521">NADP</keyword>
<keyword id="KW-0547">Nucleotide-binding</keyword>
<keyword id="KW-0560">Oxidoreductase</keyword>
<keyword id="KW-1185">Reference proteome</keyword>
<sequence>MTKVLVLYHSMYGHIETMANSIAEGAREVSGVEVTIKRVPETMDPARFAAAGGKTEQSAPVATPAELVDYDAIIFGVPTRFGNMTAQMRNFLDQTGGLWAKGALFGKIASVFASTGVGGGQEMTITSTWTTLAHHGMVIVPIGYGTAEMFDISHVGGGTPYGATTLAGGDGSRQPDARELAIARFQGKHVATVAAKMKG</sequence>
<evidence type="ECO:0000255" key="1">
    <source>
        <dbReference type="HAMAP-Rule" id="MF_01017"/>
    </source>
</evidence>
<accession>C4L7R5</accession>
<gene>
    <name type="ordered locus">Tola_0084</name>
</gene>
<reference key="1">
    <citation type="submission" date="2009-05" db="EMBL/GenBank/DDBJ databases">
        <title>Complete sequence of Tolumonas auensis DSM 9187.</title>
        <authorList>
            <consortium name="US DOE Joint Genome Institute"/>
            <person name="Lucas S."/>
            <person name="Copeland A."/>
            <person name="Lapidus A."/>
            <person name="Glavina del Rio T."/>
            <person name="Tice H."/>
            <person name="Bruce D."/>
            <person name="Goodwin L."/>
            <person name="Pitluck S."/>
            <person name="Chertkov O."/>
            <person name="Brettin T."/>
            <person name="Detter J.C."/>
            <person name="Han C."/>
            <person name="Larimer F."/>
            <person name="Land M."/>
            <person name="Hauser L."/>
            <person name="Kyrpides N."/>
            <person name="Mikhailova N."/>
            <person name="Spring S."/>
            <person name="Beller H."/>
        </authorList>
    </citation>
    <scope>NUCLEOTIDE SEQUENCE [LARGE SCALE GENOMIC DNA]</scope>
    <source>
        <strain>DSM 9187 / NBRC 110442 / TA 4</strain>
    </source>
</reference>
<protein>
    <recommendedName>
        <fullName evidence="1">NAD(P)H dehydrogenase (quinone)</fullName>
        <ecNumber evidence="1">1.6.5.2</ecNumber>
    </recommendedName>
    <alternativeName>
        <fullName>Flavoprotein WrbA</fullName>
    </alternativeName>
    <alternativeName>
        <fullName evidence="1">NAD(P)H:quinone oxidoreductase</fullName>
        <shortName evidence="1">NQO</shortName>
    </alternativeName>
</protein>